<feature type="chain" id="PRO_0000262353" description="N-succinylarginine dihydrolase">
    <location>
        <begin position="1"/>
        <end position="446"/>
    </location>
</feature>
<feature type="active site" evidence="1">
    <location>
        <position position="174"/>
    </location>
</feature>
<feature type="active site" evidence="1">
    <location>
        <position position="250"/>
    </location>
</feature>
<feature type="active site" description="Nucleophile" evidence="1">
    <location>
        <position position="369"/>
    </location>
</feature>
<feature type="binding site" evidence="1">
    <location>
        <begin position="19"/>
        <end position="28"/>
    </location>
    <ligand>
        <name>substrate</name>
    </ligand>
</feature>
<feature type="binding site" evidence="1">
    <location>
        <position position="110"/>
    </location>
    <ligand>
        <name>substrate</name>
    </ligand>
</feature>
<feature type="binding site" evidence="1">
    <location>
        <begin position="137"/>
        <end position="138"/>
    </location>
    <ligand>
        <name>substrate</name>
    </ligand>
</feature>
<feature type="binding site" evidence="1">
    <location>
        <position position="214"/>
    </location>
    <ligand>
        <name>substrate</name>
    </ligand>
</feature>
<feature type="binding site" evidence="1">
    <location>
        <position position="252"/>
    </location>
    <ligand>
        <name>substrate</name>
    </ligand>
</feature>
<feature type="binding site" evidence="1">
    <location>
        <position position="363"/>
    </location>
    <ligand>
        <name>substrate</name>
    </ligand>
</feature>
<evidence type="ECO:0000255" key="1">
    <source>
        <dbReference type="HAMAP-Rule" id="MF_01172"/>
    </source>
</evidence>
<evidence type="ECO:0000305" key="2"/>
<comment type="function">
    <text evidence="1">Catalyzes the hydrolysis of N(2)-succinylarginine into N(2)-succinylornithine, ammonia and CO(2).</text>
</comment>
<comment type="catalytic activity">
    <reaction evidence="1">
        <text>N(2)-succinyl-L-arginine + 2 H2O + 2 H(+) = N(2)-succinyl-L-ornithine + 2 NH4(+) + CO2</text>
        <dbReference type="Rhea" id="RHEA:19533"/>
        <dbReference type="ChEBI" id="CHEBI:15377"/>
        <dbReference type="ChEBI" id="CHEBI:15378"/>
        <dbReference type="ChEBI" id="CHEBI:16526"/>
        <dbReference type="ChEBI" id="CHEBI:28938"/>
        <dbReference type="ChEBI" id="CHEBI:58241"/>
        <dbReference type="ChEBI" id="CHEBI:58514"/>
        <dbReference type="EC" id="3.5.3.23"/>
    </reaction>
</comment>
<comment type="pathway">
    <text evidence="1">Amino-acid degradation; L-arginine degradation via AST pathway; L-glutamate and succinate from L-arginine: step 2/5.</text>
</comment>
<comment type="subunit">
    <text evidence="1">Homodimer.</text>
</comment>
<comment type="similarity">
    <text evidence="1">Belongs to the succinylarginine dihydrolase family.</text>
</comment>
<comment type="sequence caution" evidence="2">
    <conflict type="erroneous initiation">
        <sequence resource="EMBL-CDS" id="ABC28784"/>
    </conflict>
</comment>
<name>ASTB_HAHCH</name>
<gene>
    <name evidence="1" type="primary">astB</name>
    <name type="ordered locus">HCH_01951</name>
</gene>
<reference key="1">
    <citation type="journal article" date="2005" name="Nucleic Acids Res.">
        <title>Genomic blueprint of Hahella chejuensis, a marine microbe producing an algicidal agent.</title>
        <authorList>
            <person name="Jeong H."/>
            <person name="Yim J.H."/>
            <person name="Lee C."/>
            <person name="Choi S.-H."/>
            <person name="Park Y.K."/>
            <person name="Yoon S.H."/>
            <person name="Hur C.-G."/>
            <person name="Kang H.-Y."/>
            <person name="Kim D."/>
            <person name="Lee H.H."/>
            <person name="Park K.H."/>
            <person name="Park S.-H."/>
            <person name="Park H.-S."/>
            <person name="Lee H.K."/>
            <person name="Oh T.K."/>
            <person name="Kim J.F."/>
        </authorList>
    </citation>
    <scope>NUCLEOTIDE SEQUENCE [LARGE SCALE GENOMIC DNA]</scope>
    <source>
        <strain>KCTC 2396</strain>
    </source>
</reference>
<dbReference type="EC" id="3.5.3.23" evidence="1"/>
<dbReference type="EMBL" id="CP000155">
    <property type="protein sequence ID" value="ABC28784.1"/>
    <property type="status" value="ALT_INIT"/>
    <property type="molecule type" value="Genomic_DNA"/>
</dbReference>
<dbReference type="RefSeq" id="WP_041599375.1">
    <property type="nucleotide sequence ID" value="NC_007645.1"/>
</dbReference>
<dbReference type="SMR" id="Q2SKP0"/>
<dbReference type="STRING" id="349521.HCH_01951"/>
<dbReference type="KEGG" id="hch:HCH_01951"/>
<dbReference type="eggNOG" id="COG3724">
    <property type="taxonomic scope" value="Bacteria"/>
</dbReference>
<dbReference type="HOGENOM" id="CLU_053835_0_0_6"/>
<dbReference type="OrthoDB" id="248552at2"/>
<dbReference type="UniPathway" id="UPA00185">
    <property type="reaction ID" value="UER00280"/>
</dbReference>
<dbReference type="Proteomes" id="UP000000238">
    <property type="component" value="Chromosome"/>
</dbReference>
<dbReference type="GO" id="GO:0009015">
    <property type="term" value="F:N-succinylarginine dihydrolase activity"/>
    <property type="evidence" value="ECO:0007669"/>
    <property type="project" value="UniProtKB-UniRule"/>
</dbReference>
<dbReference type="GO" id="GO:0019544">
    <property type="term" value="P:arginine catabolic process to glutamate"/>
    <property type="evidence" value="ECO:0007669"/>
    <property type="project" value="UniProtKB-UniRule"/>
</dbReference>
<dbReference type="GO" id="GO:0019545">
    <property type="term" value="P:arginine catabolic process to succinate"/>
    <property type="evidence" value="ECO:0007669"/>
    <property type="project" value="UniProtKB-UniRule"/>
</dbReference>
<dbReference type="Gene3D" id="3.75.10.20">
    <property type="entry name" value="Succinylarginine dihydrolase"/>
    <property type="match status" value="1"/>
</dbReference>
<dbReference type="HAMAP" id="MF_01172">
    <property type="entry name" value="AstB"/>
    <property type="match status" value="1"/>
</dbReference>
<dbReference type="InterPro" id="IPR037031">
    <property type="entry name" value="AstB_sf"/>
</dbReference>
<dbReference type="InterPro" id="IPR007079">
    <property type="entry name" value="SuccinylArg_d-Hdrlase_AstB"/>
</dbReference>
<dbReference type="NCBIfam" id="TIGR03241">
    <property type="entry name" value="arg_catab_astB"/>
    <property type="match status" value="1"/>
</dbReference>
<dbReference type="NCBIfam" id="NF009789">
    <property type="entry name" value="PRK13281.1"/>
    <property type="match status" value="1"/>
</dbReference>
<dbReference type="PANTHER" id="PTHR30420">
    <property type="entry name" value="N-SUCCINYLARGININE DIHYDROLASE"/>
    <property type="match status" value="1"/>
</dbReference>
<dbReference type="PANTHER" id="PTHR30420:SF2">
    <property type="entry name" value="N-SUCCINYLARGININE DIHYDROLASE"/>
    <property type="match status" value="1"/>
</dbReference>
<dbReference type="Pfam" id="PF04996">
    <property type="entry name" value="AstB"/>
    <property type="match status" value="1"/>
</dbReference>
<dbReference type="SUPFAM" id="SSF55909">
    <property type="entry name" value="Pentein"/>
    <property type="match status" value="1"/>
</dbReference>
<protein>
    <recommendedName>
        <fullName evidence="1">N-succinylarginine dihydrolase</fullName>
        <ecNumber evidence="1">3.5.3.23</ecNumber>
    </recommendedName>
</protein>
<organism>
    <name type="scientific">Hahella chejuensis (strain KCTC 2396)</name>
    <dbReference type="NCBI Taxonomy" id="349521"/>
    <lineage>
        <taxon>Bacteria</taxon>
        <taxon>Pseudomonadati</taxon>
        <taxon>Pseudomonadota</taxon>
        <taxon>Gammaproteobacteria</taxon>
        <taxon>Oceanospirillales</taxon>
        <taxon>Hahellaceae</taxon>
        <taxon>Hahella</taxon>
    </lineage>
</organism>
<sequence length="446" mass="49172">MKAFEVNFDGLVGPTHNYSGLSYGNVASETNIRDVSNPKEAAKQGLRKMKALHDMGFKQGVLLPQERPDIATLRRLGFTGSDREVLLQAAHQAPVFLGAVASASCMWTANAATVSPSADTTDGRVHFTAANLNAKFHRSIEHPTTTRILQGIFNNDQYFAHHKALPPTSQFGDEGAANHTRFCKNYEDKGVELFVYGRVAFDENAPRPMKYPARQTLEACQAVARLHGLADSSVVYAQQNPAVIDQGVFHNDVIAVGNRNVLFYHEQAFLNTSQMLTELEGKLQGCLLKAVKVSDSEVSVADAVSSYLFNSQLLSLNDDDMMLVVPHECRDNPNVKAYLDDLVTRGGPIKRVEVFDLKQSMKNGGGPACLRLRVALTEAELAAVHPHVMMSDGLFDTLNAWVDKHYRDRISQQDLADPQLLTECRTALDELTQLLQLGSLYPFQLA</sequence>
<accession>Q2SKP0</accession>
<keyword id="KW-0056">Arginine metabolism</keyword>
<keyword id="KW-0378">Hydrolase</keyword>
<keyword id="KW-1185">Reference proteome</keyword>
<proteinExistence type="inferred from homology"/>